<evidence type="ECO:0000255" key="1">
    <source>
        <dbReference type="HAMAP-Rule" id="MF_01804"/>
    </source>
</evidence>
<keyword id="KW-0131">Cell cycle</keyword>
<keyword id="KW-0132">Cell division</keyword>
<keyword id="KW-0159">Chromosome partition</keyword>
<keyword id="KW-0963">Cytoplasm</keyword>
<reference key="1">
    <citation type="journal article" date="2007" name="PLoS ONE">
        <title>Analysis of the neurotoxin complex genes in Clostridium botulinum A1-A4 and B1 strains: BoNT/A3, /Ba4 and /B1 clusters are located within plasmids.</title>
        <authorList>
            <person name="Smith T.J."/>
            <person name="Hill K.K."/>
            <person name="Foley B.T."/>
            <person name="Detter J.C."/>
            <person name="Munk A.C."/>
            <person name="Bruce D.C."/>
            <person name="Doggett N.A."/>
            <person name="Smith L.A."/>
            <person name="Marks J.D."/>
            <person name="Xie G."/>
            <person name="Brettin T.S."/>
        </authorList>
    </citation>
    <scope>NUCLEOTIDE SEQUENCE [LARGE SCALE GENOMIC DNA]</scope>
    <source>
        <strain>Okra / Type B1</strain>
    </source>
</reference>
<comment type="function">
    <text evidence="1">Participates in chromosomal partition during cell division. May act via the formation of a condensin-like complex containing Smc and ScpA that pull DNA away from mid-cell into both cell halves.</text>
</comment>
<comment type="subunit">
    <text evidence="1">Homodimer. Homodimerization may be required to stabilize the binding of ScpA to the Smc head domains. Component of a cohesin-like complex composed of ScpA, ScpB and the Smc homodimer, in which ScpA and ScpB bind to the head domain of Smc. The presence of the three proteins is required for the association of the complex with DNA.</text>
</comment>
<comment type="subcellular location">
    <subcellularLocation>
        <location evidence="1">Cytoplasm</location>
    </subcellularLocation>
    <text evidence="1">Associated with two foci at the outer edges of the nucleoid region in young cells, and at four foci within both cell halves in older cells.</text>
</comment>
<comment type="similarity">
    <text evidence="1">Belongs to the ScpB family.</text>
</comment>
<accession>B1IMC4</accession>
<dbReference type="EMBL" id="CP000939">
    <property type="protein sequence ID" value="ACA43863.1"/>
    <property type="molecule type" value="Genomic_DNA"/>
</dbReference>
<dbReference type="RefSeq" id="WP_003402814.1">
    <property type="nucleotide sequence ID" value="NC_010516.1"/>
</dbReference>
<dbReference type="SMR" id="B1IMC4"/>
<dbReference type="GeneID" id="5186111"/>
<dbReference type="KEGG" id="cbb:CLD_2784"/>
<dbReference type="HOGENOM" id="CLU_045647_5_3_9"/>
<dbReference type="Proteomes" id="UP000008541">
    <property type="component" value="Chromosome"/>
</dbReference>
<dbReference type="GO" id="GO:0005737">
    <property type="term" value="C:cytoplasm"/>
    <property type="evidence" value="ECO:0007669"/>
    <property type="project" value="UniProtKB-SubCell"/>
</dbReference>
<dbReference type="GO" id="GO:0051301">
    <property type="term" value="P:cell division"/>
    <property type="evidence" value="ECO:0007669"/>
    <property type="project" value="UniProtKB-KW"/>
</dbReference>
<dbReference type="GO" id="GO:0051304">
    <property type="term" value="P:chromosome separation"/>
    <property type="evidence" value="ECO:0007669"/>
    <property type="project" value="InterPro"/>
</dbReference>
<dbReference type="GO" id="GO:0006260">
    <property type="term" value="P:DNA replication"/>
    <property type="evidence" value="ECO:0007669"/>
    <property type="project" value="UniProtKB-UniRule"/>
</dbReference>
<dbReference type="Gene3D" id="1.10.10.10">
    <property type="entry name" value="Winged helix-like DNA-binding domain superfamily/Winged helix DNA-binding domain"/>
    <property type="match status" value="2"/>
</dbReference>
<dbReference type="HAMAP" id="MF_01804">
    <property type="entry name" value="ScpB"/>
    <property type="match status" value="1"/>
</dbReference>
<dbReference type="InterPro" id="IPR005234">
    <property type="entry name" value="ScpB_csome_segregation"/>
</dbReference>
<dbReference type="InterPro" id="IPR036388">
    <property type="entry name" value="WH-like_DNA-bd_sf"/>
</dbReference>
<dbReference type="InterPro" id="IPR036390">
    <property type="entry name" value="WH_DNA-bd_sf"/>
</dbReference>
<dbReference type="NCBIfam" id="TIGR00281">
    <property type="entry name" value="SMC-Scp complex subunit ScpB"/>
    <property type="match status" value="1"/>
</dbReference>
<dbReference type="PANTHER" id="PTHR34298">
    <property type="entry name" value="SEGREGATION AND CONDENSATION PROTEIN B"/>
    <property type="match status" value="1"/>
</dbReference>
<dbReference type="PANTHER" id="PTHR34298:SF2">
    <property type="entry name" value="SEGREGATION AND CONDENSATION PROTEIN B"/>
    <property type="match status" value="1"/>
</dbReference>
<dbReference type="Pfam" id="PF04079">
    <property type="entry name" value="SMC_ScpB"/>
    <property type="match status" value="1"/>
</dbReference>
<dbReference type="PIRSF" id="PIRSF019345">
    <property type="entry name" value="ScpB"/>
    <property type="match status" value="1"/>
</dbReference>
<dbReference type="SUPFAM" id="SSF46785">
    <property type="entry name" value="Winged helix' DNA-binding domain"/>
    <property type="match status" value="2"/>
</dbReference>
<feature type="chain" id="PRO_1000187534" description="Segregation and condensation protein B">
    <location>
        <begin position="1"/>
        <end position="193"/>
    </location>
</feature>
<gene>
    <name evidence="1" type="primary">scpB</name>
    <name type="ordered locus">CLD_2784</name>
</gene>
<sequence>MNKDHEEQLEINEVSQKNKYKSIIESLLFMSGEPINIKDLATILNCKQDKVSSLLNEMNNSYVGKDRGIKILIHNRAVQLVTKPENSIYVEKLLKTNVRQSLSQAALETLSIIAYKQPITRVAIDEIRGVKSDRAIYTLLEKNIIKECGRLDVPGKPILYGTTEEFLKFFGLDSIEAIPNLEDLLKEFSKEEN</sequence>
<organism>
    <name type="scientific">Clostridium botulinum (strain Okra / Type B1)</name>
    <dbReference type="NCBI Taxonomy" id="498213"/>
    <lineage>
        <taxon>Bacteria</taxon>
        <taxon>Bacillati</taxon>
        <taxon>Bacillota</taxon>
        <taxon>Clostridia</taxon>
        <taxon>Eubacteriales</taxon>
        <taxon>Clostridiaceae</taxon>
        <taxon>Clostridium</taxon>
    </lineage>
</organism>
<protein>
    <recommendedName>
        <fullName evidence="1">Segregation and condensation protein B</fullName>
    </recommendedName>
</protein>
<name>SCPB_CLOBK</name>
<proteinExistence type="inferred from homology"/>